<keyword id="KW-0520">NAD</keyword>
<keyword id="KW-1185">Reference proteome</keyword>
<keyword id="KW-0808">Transferase</keyword>
<dbReference type="EC" id="2.7.1.-"/>
<dbReference type="EMBL" id="AE004091">
    <property type="protein sequence ID" value="AAG03444.1"/>
    <property type="molecule type" value="Genomic_DNA"/>
</dbReference>
<dbReference type="PIR" id="D83638">
    <property type="entry name" value="D83638"/>
</dbReference>
<dbReference type="RefSeq" id="NP_248744.1">
    <property type="nucleotide sequence ID" value="NC_002516.2"/>
</dbReference>
<dbReference type="RefSeq" id="WP_003111523.1">
    <property type="nucleotide sequence ID" value="NZ_QZGE01000015.1"/>
</dbReference>
<dbReference type="SMR" id="Q9I778"/>
<dbReference type="FunCoup" id="Q9I778">
    <property type="interactions" value="246"/>
</dbReference>
<dbReference type="STRING" id="208964.PA0054"/>
<dbReference type="PaxDb" id="208964-PA0054"/>
<dbReference type="GeneID" id="878088"/>
<dbReference type="KEGG" id="pae:PA0054"/>
<dbReference type="PATRIC" id="fig|208964.12.peg.57"/>
<dbReference type="PseudoCAP" id="PA0054"/>
<dbReference type="HOGENOM" id="CLU_052998_4_0_6"/>
<dbReference type="InParanoid" id="Q9I778"/>
<dbReference type="OrthoDB" id="4537997at2"/>
<dbReference type="PhylomeDB" id="Q9I778"/>
<dbReference type="BioCyc" id="PAER208964:G1FZ6-56-MONOMER"/>
<dbReference type="Proteomes" id="UP000002438">
    <property type="component" value="Chromosome"/>
</dbReference>
<dbReference type="GO" id="GO:0003950">
    <property type="term" value="F:NAD+ poly-ADP-ribosyltransferase activity"/>
    <property type="evidence" value="ECO:0007669"/>
    <property type="project" value="InterPro"/>
</dbReference>
<dbReference type="GO" id="GO:0000215">
    <property type="term" value="F:tRNA 2'-phosphotransferase activity"/>
    <property type="evidence" value="ECO:0000318"/>
    <property type="project" value="GO_Central"/>
</dbReference>
<dbReference type="GO" id="GO:0008033">
    <property type="term" value="P:tRNA processing"/>
    <property type="evidence" value="ECO:0000318"/>
    <property type="project" value="GO_Central"/>
</dbReference>
<dbReference type="GO" id="GO:0006388">
    <property type="term" value="P:tRNA splicing, via endonucleolytic cleavage and ligation"/>
    <property type="evidence" value="ECO:0007669"/>
    <property type="project" value="UniProtKB-UniRule"/>
</dbReference>
<dbReference type="Gene3D" id="3.20.170.30">
    <property type="match status" value="1"/>
</dbReference>
<dbReference type="Gene3D" id="1.10.10.970">
    <property type="entry name" value="RNA 2'-phosphotransferase, Tpt1/KptA family, N-terminal domain"/>
    <property type="match status" value="1"/>
</dbReference>
<dbReference type="HAMAP" id="MF_00299">
    <property type="entry name" value="KptA"/>
    <property type="match status" value="1"/>
</dbReference>
<dbReference type="InterPro" id="IPR002745">
    <property type="entry name" value="Ptrans_KptA/Tpt1"/>
</dbReference>
<dbReference type="InterPro" id="IPR042081">
    <property type="entry name" value="RNA_2'-PTrans_C"/>
</dbReference>
<dbReference type="InterPro" id="IPR022928">
    <property type="entry name" value="RNA_2'-PTrans_KptA"/>
</dbReference>
<dbReference type="InterPro" id="IPR042080">
    <property type="entry name" value="RNA_2'-PTrans_N"/>
</dbReference>
<dbReference type="NCBIfam" id="NF002014">
    <property type="entry name" value="PRK00819.1-4"/>
    <property type="match status" value="1"/>
</dbReference>
<dbReference type="PANTHER" id="PTHR12684">
    <property type="entry name" value="PUTATIVE PHOSPHOTRANSFERASE"/>
    <property type="match status" value="1"/>
</dbReference>
<dbReference type="PANTHER" id="PTHR12684:SF2">
    <property type="entry name" value="TRNA 2'-PHOSPHOTRANSFERASE 1"/>
    <property type="match status" value="1"/>
</dbReference>
<dbReference type="Pfam" id="PF01885">
    <property type="entry name" value="PTS_2-RNA"/>
    <property type="match status" value="1"/>
</dbReference>
<dbReference type="SUPFAM" id="SSF56399">
    <property type="entry name" value="ADP-ribosylation"/>
    <property type="match status" value="1"/>
</dbReference>
<feature type="chain" id="PRO_0000157481" description="Probable RNA 2'-phosphotransferase">
    <location>
        <begin position="1"/>
        <end position="182"/>
    </location>
</feature>
<comment type="function">
    <text evidence="1">Removes the 2'-phosphate from RNA via an intermediate in which the phosphate is ADP-ribosylated by NAD followed by a presumed transesterification to release the RNA and generate ADP-ribose 1''-2''-cyclic phosphate (APPR&gt;P). May function as an ADP-ribosylase (By similarity).</text>
</comment>
<comment type="similarity">
    <text evidence="2">Belongs to the KptA/TPT1 family.</text>
</comment>
<gene>
    <name type="primary">kptA</name>
    <name type="ordered locus">PA0054</name>
</gene>
<evidence type="ECO:0000250" key="1"/>
<evidence type="ECO:0000305" key="2"/>
<protein>
    <recommendedName>
        <fullName>Probable RNA 2'-phosphotransferase</fullName>
        <ecNumber>2.7.1.-</ecNumber>
    </recommendedName>
</protein>
<sequence length="182" mass="20024">MDRKTLDDTSKFLSYVLRHQPEAIGLTLDGEGWADIDALIAGAARDGRALDRMLLGAVVENNDKKRFALSADGQRIRAVQGHSHAAVAIAYAPAVPPAVLYHGTASRFLDSIRERGLVPGSRHHVHLSARRATALEVGRRYGSPVLLEIDARDMHLAGHLFHQAENGVWLTERVPVRFIREA</sequence>
<accession>Q9I778</accession>
<name>KPTA_PSEAE</name>
<proteinExistence type="inferred from homology"/>
<reference key="1">
    <citation type="journal article" date="2000" name="Nature">
        <title>Complete genome sequence of Pseudomonas aeruginosa PAO1, an opportunistic pathogen.</title>
        <authorList>
            <person name="Stover C.K."/>
            <person name="Pham X.-Q.T."/>
            <person name="Erwin A.L."/>
            <person name="Mizoguchi S.D."/>
            <person name="Warrener P."/>
            <person name="Hickey M.J."/>
            <person name="Brinkman F.S.L."/>
            <person name="Hufnagle W.O."/>
            <person name="Kowalik D.J."/>
            <person name="Lagrou M."/>
            <person name="Garber R.L."/>
            <person name="Goltry L."/>
            <person name="Tolentino E."/>
            <person name="Westbrock-Wadman S."/>
            <person name="Yuan Y."/>
            <person name="Brody L.L."/>
            <person name="Coulter S.N."/>
            <person name="Folger K.R."/>
            <person name="Kas A."/>
            <person name="Larbig K."/>
            <person name="Lim R.M."/>
            <person name="Smith K.A."/>
            <person name="Spencer D.H."/>
            <person name="Wong G.K.-S."/>
            <person name="Wu Z."/>
            <person name="Paulsen I.T."/>
            <person name="Reizer J."/>
            <person name="Saier M.H. Jr."/>
            <person name="Hancock R.E.W."/>
            <person name="Lory S."/>
            <person name="Olson M.V."/>
        </authorList>
    </citation>
    <scope>NUCLEOTIDE SEQUENCE [LARGE SCALE GENOMIC DNA]</scope>
    <source>
        <strain>ATCC 15692 / DSM 22644 / CIP 104116 / JCM 14847 / LMG 12228 / 1C / PRS 101 / PAO1</strain>
    </source>
</reference>
<organism>
    <name type="scientific">Pseudomonas aeruginosa (strain ATCC 15692 / DSM 22644 / CIP 104116 / JCM 14847 / LMG 12228 / 1C / PRS 101 / PAO1)</name>
    <dbReference type="NCBI Taxonomy" id="208964"/>
    <lineage>
        <taxon>Bacteria</taxon>
        <taxon>Pseudomonadati</taxon>
        <taxon>Pseudomonadota</taxon>
        <taxon>Gammaproteobacteria</taxon>
        <taxon>Pseudomonadales</taxon>
        <taxon>Pseudomonadaceae</taxon>
        <taxon>Pseudomonas</taxon>
    </lineage>
</organism>